<reference key="1">
    <citation type="journal article" date="2001" name="Genome Res.">
        <title>The complete genome sequence of the lactic acid bacterium Lactococcus lactis ssp. lactis IL1403.</title>
        <authorList>
            <person name="Bolotin A."/>
            <person name="Wincker P."/>
            <person name="Mauger S."/>
            <person name="Jaillon O."/>
            <person name="Malarme K."/>
            <person name="Weissenbach J."/>
            <person name="Ehrlich S.D."/>
            <person name="Sorokin A."/>
        </authorList>
    </citation>
    <scope>NUCLEOTIDE SEQUENCE [LARGE SCALE GENOMIC DNA]</scope>
    <source>
        <strain>IL1403</strain>
    </source>
</reference>
<accession>Q9CG17</accession>
<keyword id="KW-0963">Cytoplasm</keyword>
<keyword id="KW-0255">Endonuclease</keyword>
<keyword id="KW-0378">Hydrolase</keyword>
<keyword id="KW-0464">Manganese</keyword>
<keyword id="KW-0479">Metal-binding</keyword>
<keyword id="KW-0540">Nuclease</keyword>
<keyword id="KW-1185">Reference proteome</keyword>
<sequence>MGQTIKEIKATLAKLTDLSAKEFLEYEADERAGVQAALKSRKKQILAELAEEARLEQMLEFEKELYGQEIQLIAGIDEVGRGPLAGPVVTAAVILPKNCKIRGLNDSKKVPKSKHHAILSEIQEKALAIGIGIVDAEKIDEVNIYEATKIAMIQAVSKLSVKPEHLLIDAMVLDFPIAQTKIIHGDARSASIAAASIVAKVTRDEMMKEFALEFPEYDFEHNAGYGTAKHLEALTKYGITRIHRKSYEPIKTMVNFKS</sequence>
<protein>
    <recommendedName>
        <fullName>Ribonuclease HII</fullName>
        <shortName>RNase HII</shortName>
        <ecNumber>3.1.26.4</ecNumber>
    </recommendedName>
</protein>
<feature type="chain" id="PRO_0000111583" description="Ribonuclease HII">
    <location>
        <begin position="1"/>
        <end position="258"/>
    </location>
</feature>
<feature type="domain" description="RNase H type-2" evidence="2">
    <location>
        <begin position="71"/>
        <end position="258"/>
    </location>
</feature>
<feature type="binding site" evidence="1">
    <location>
        <position position="77"/>
    </location>
    <ligand>
        <name>a divalent metal cation</name>
        <dbReference type="ChEBI" id="CHEBI:60240"/>
    </ligand>
</feature>
<feature type="binding site" evidence="1">
    <location>
        <position position="78"/>
    </location>
    <ligand>
        <name>a divalent metal cation</name>
        <dbReference type="ChEBI" id="CHEBI:60240"/>
    </ligand>
</feature>
<feature type="binding site" evidence="1">
    <location>
        <position position="169"/>
    </location>
    <ligand>
        <name>a divalent metal cation</name>
        <dbReference type="ChEBI" id="CHEBI:60240"/>
    </ligand>
</feature>
<organism>
    <name type="scientific">Lactococcus lactis subsp. lactis (strain IL1403)</name>
    <name type="common">Streptococcus lactis</name>
    <dbReference type="NCBI Taxonomy" id="272623"/>
    <lineage>
        <taxon>Bacteria</taxon>
        <taxon>Bacillati</taxon>
        <taxon>Bacillota</taxon>
        <taxon>Bacilli</taxon>
        <taxon>Lactobacillales</taxon>
        <taxon>Streptococcaceae</taxon>
        <taxon>Lactococcus</taxon>
    </lineage>
</organism>
<dbReference type="EC" id="3.1.26.4"/>
<dbReference type="EMBL" id="AE005176">
    <property type="protein sequence ID" value="AAK05391.1"/>
    <property type="molecule type" value="Genomic_DNA"/>
</dbReference>
<dbReference type="PIR" id="E86786">
    <property type="entry name" value="E86786"/>
</dbReference>
<dbReference type="RefSeq" id="NP_267449.1">
    <property type="nucleotide sequence ID" value="NC_002662.1"/>
</dbReference>
<dbReference type="RefSeq" id="WP_003130174.1">
    <property type="nucleotide sequence ID" value="NC_002662.1"/>
</dbReference>
<dbReference type="SMR" id="Q9CG17"/>
<dbReference type="PaxDb" id="272623-L0320"/>
<dbReference type="EnsemblBacteria" id="AAK05391">
    <property type="protein sequence ID" value="AAK05391"/>
    <property type="gene ID" value="L0320"/>
</dbReference>
<dbReference type="KEGG" id="lla:L0320"/>
<dbReference type="PATRIC" id="fig|272623.7.peg.1396"/>
<dbReference type="eggNOG" id="COG0164">
    <property type="taxonomic scope" value="Bacteria"/>
</dbReference>
<dbReference type="HOGENOM" id="CLU_036532_2_1_9"/>
<dbReference type="OrthoDB" id="9803420at2"/>
<dbReference type="Proteomes" id="UP000002196">
    <property type="component" value="Chromosome"/>
</dbReference>
<dbReference type="GO" id="GO:0005737">
    <property type="term" value="C:cytoplasm"/>
    <property type="evidence" value="ECO:0007669"/>
    <property type="project" value="UniProtKB-SubCell"/>
</dbReference>
<dbReference type="GO" id="GO:0032299">
    <property type="term" value="C:ribonuclease H2 complex"/>
    <property type="evidence" value="ECO:0007669"/>
    <property type="project" value="TreeGrafter"/>
</dbReference>
<dbReference type="GO" id="GO:0030145">
    <property type="term" value="F:manganese ion binding"/>
    <property type="evidence" value="ECO:0007669"/>
    <property type="project" value="UniProtKB-UniRule"/>
</dbReference>
<dbReference type="GO" id="GO:0003723">
    <property type="term" value="F:RNA binding"/>
    <property type="evidence" value="ECO:0007669"/>
    <property type="project" value="InterPro"/>
</dbReference>
<dbReference type="GO" id="GO:0004523">
    <property type="term" value="F:RNA-DNA hybrid ribonuclease activity"/>
    <property type="evidence" value="ECO:0007669"/>
    <property type="project" value="UniProtKB-UniRule"/>
</dbReference>
<dbReference type="GO" id="GO:0043137">
    <property type="term" value="P:DNA replication, removal of RNA primer"/>
    <property type="evidence" value="ECO:0007669"/>
    <property type="project" value="TreeGrafter"/>
</dbReference>
<dbReference type="GO" id="GO:0006298">
    <property type="term" value="P:mismatch repair"/>
    <property type="evidence" value="ECO:0007669"/>
    <property type="project" value="TreeGrafter"/>
</dbReference>
<dbReference type="CDD" id="cd07182">
    <property type="entry name" value="RNase_HII_bacteria_HII_like"/>
    <property type="match status" value="1"/>
</dbReference>
<dbReference type="FunFam" id="3.30.420.10:FF:000006">
    <property type="entry name" value="Ribonuclease HII"/>
    <property type="match status" value="1"/>
</dbReference>
<dbReference type="Gene3D" id="3.30.420.10">
    <property type="entry name" value="Ribonuclease H-like superfamily/Ribonuclease H"/>
    <property type="match status" value="1"/>
</dbReference>
<dbReference type="HAMAP" id="MF_00052_B">
    <property type="entry name" value="RNase_HII_B"/>
    <property type="match status" value="1"/>
</dbReference>
<dbReference type="InterPro" id="IPR022898">
    <property type="entry name" value="RNase_HII"/>
</dbReference>
<dbReference type="InterPro" id="IPR001352">
    <property type="entry name" value="RNase_HII/HIII"/>
</dbReference>
<dbReference type="InterPro" id="IPR024567">
    <property type="entry name" value="RNase_HII/HIII_dom"/>
</dbReference>
<dbReference type="InterPro" id="IPR012337">
    <property type="entry name" value="RNaseH-like_sf"/>
</dbReference>
<dbReference type="InterPro" id="IPR036397">
    <property type="entry name" value="RNaseH_sf"/>
</dbReference>
<dbReference type="NCBIfam" id="NF000594">
    <property type="entry name" value="PRK00015.1-1"/>
    <property type="match status" value="1"/>
</dbReference>
<dbReference type="NCBIfam" id="NF000595">
    <property type="entry name" value="PRK00015.1-3"/>
    <property type="match status" value="1"/>
</dbReference>
<dbReference type="PANTHER" id="PTHR10954">
    <property type="entry name" value="RIBONUCLEASE H2 SUBUNIT A"/>
    <property type="match status" value="1"/>
</dbReference>
<dbReference type="PANTHER" id="PTHR10954:SF18">
    <property type="entry name" value="RIBONUCLEASE HII"/>
    <property type="match status" value="1"/>
</dbReference>
<dbReference type="Pfam" id="PF01351">
    <property type="entry name" value="RNase_HII"/>
    <property type="match status" value="1"/>
</dbReference>
<dbReference type="SUPFAM" id="SSF53098">
    <property type="entry name" value="Ribonuclease H-like"/>
    <property type="match status" value="1"/>
</dbReference>
<dbReference type="PROSITE" id="PS51975">
    <property type="entry name" value="RNASE_H_2"/>
    <property type="match status" value="1"/>
</dbReference>
<proteinExistence type="inferred from homology"/>
<comment type="function">
    <text evidence="1">Endonuclease that specifically degrades the RNA of RNA-DNA hybrids.</text>
</comment>
<comment type="catalytic activity">
    <reaction>
        <text>Endonucleolytic cleavage to 5'-phosphomonoester.</text>
        <dbReference type="EC" id="3.1.26.4"/>
    </reaction>
</comment>
<comment type="cofactor">
    <cofactor evidence="1">
        <name>Mn(2+)</name>
        <dbReference type="ChEBI" id="CHEBI:29035"/>
    </cofactor>
    <cofactor evidence="1">
        <name>Mg(2+)</name>
        <dbReference type="ChEBI" id="CHEBI:18420"/>
    </cofactor>
    <text evidence="1">Manganese or magnesium. Binds 1 divalent metal ion per monomer in the absence of substrate. May bind a second metal ion after substrate binding.</text>
</comment>
<comment type="subcellular location">
    <subcellularLocation>
        <location evidence="3">Cytoplasm</location>
    </subcellularLocation>
</comment>
<comment type="similarity">
    <text evidence="3">Belongs to the RNase HII family.</text>
</comment>
<gene>
    <name type="primary">rnhB</name>
    <name type="ordered locus">LL1293</name>
    <name type="ORF">L0320</name>
</gene>
<name>RNH2_LACLA</name>
<evidence type="ECO:0000250" key="1"/>
<evidence type="ECO:0000255" key="2">
    <source>
        <dbReference type="PROSITE-ProRule" id="PRU01319"/>
    </source>
</evidence>
<evidence type="ECO:0000305" key="3"/>